<sequence length="244" mass="27361">MAAAAAAPASSEKEVLPPSLTSSSEPPPLFDGTTRLYVAYHCPYAQRAWIARNYKGLQDKIKIVAIDLADRPAWYKEKVYPENKVPSLEHNNQVKGESLDLVKYIDTNFEGPALLPDDSEKQQFAEELLAYTDAFNKASYSSIVAKGDVCDEAVAALDKIEAALSKFNDGPFFLGQFSLVDIAYVPFIERFQIFFSGIKNYDITKGRPNLQKFIEEVNKIHAYTETKQDPQFLLEHTKKRLGIA</sequence>
<comment type="similarity">
    <text evidence="2">Belongs to the GST superfamily. HSP26 family.</text>
</comment>
<comment type="sequence caution" evidence="6">
    <conflict type="erroneous initiation">
        <sequence resource="EMBL-CDS" id="ABF95327"/>
    </conflict>
</comment>
<accession>Q8H8U5</accession>
<accession>A0A0P0VWT1</accession>
<accession>Q10N45</accession>
<name>IN21B_ORYSJ</name>
<organism>
    <name type="scientific">Oryza sativa subsp. japonica</name>
    <name type="common">Rice</name>
    <dbReference type="NCBI Taxonomy" id="39947"/>
    <lineage>
        <taxon>Eukaryota</taxon>
        <taxon>Viridiplantae</taxon>
        <taxon>Streptophyta</taxon>
        <taxon>Embryophyta</taxon>
        <taxon>Tracheophyta</taxon>
        <taxon>Spermatophyta</taxon>
        <taxon>Magnoliopsida</taxon>
        <taxon>Liliopsida</taxon>
        <taxon>Poales</taxon>
        <taxon>Poaceae</taxon>
        <taxon>BOP clade</taxon>
        <taxon>Oryzoideae</taxon>
        <taxon>Oryzeae</taxon>
        <taxon>Oryzinae</taxon>
        <taxon>Oryza</taxon>
        <taxon>Oryza sativa</taxon>
    </lineage>
</organism>
<keyword id="KW-1185">Reference proteome</keyword>
<evidence type="ECO:0000250" key="1"/>
<evidence type="ECO:0000255" key="2"/>
<evidence type="ECO:0000256" key="3">
    <source>
        <dbReference type="SAM" id="MobiDB-lite"/>
    </source>
</evidence>
<evidence type="ECO:0000269" key="4">
    <source>
    </source>
</evidence>
<evidence type="ECO:0000269" key="5">
    <source>
    </source>
</evidence>
<evidence type="ECO:0000305" key="6"/>
<evidence type="ECO:0000312" key="7">
    <source>
        <dbReference type="EMBL" id="AAN64482.1"/>
    </source>
</evidence>
<evidence type="ECO:0000312" key="8">
    <source>
        <dbReference type="EMBL" id="BAF11665.1"/>
    </source>
</evidence>
<proteinExistence type="evidence at transcript level"/>
<dbReference type="EMBL" id="AC084405">
    <property type="protein sequence ID" value="AAN64482.1"/>
    <property type="molecule type" value="Genomic_DNA"/>
</dbReference>
<dbReference type="EMBL" id="DP000009">
    <property type="protein sequence ID" value="ABF95327.1"/>
    <property type="status" value="ALT_INIT"/>
    <property type="molecule type" value="Genomic_DNA"/>
</dbReference>
<dbReference type="EMBL" id="AP008209">
    <property type="protein sequence ID" value="BAF11665.1"/>
    <property type="molecule type" value="Genomic_DNA"/>
</dbReference>
<dbReference type="EMBL" id="AP014959">
    <property type="protein sequence ID" value="BAS83590.1"/>
    <property type="molecule type" value="Genomic_DNA"/>
</dbReference>
<dbReference type="EMBL" id="AK065887">
    <property type="status" value="NOT_ANNOTATED_CDS"/>
    <property type="molecule type" value="mRNA"/>
</dbReference>
<dbReference type="RefSeq" id="XP_015630359.1">
    <property type="nucleotide sequence ID" value="XM_015774873.1"/>
</dbReference>
<dbReference type="SMR" id="Q8H8U5"/>
<dbReference type="FunCoup" id="Q8H8U5">
    <property type="interactions" value="755"/>
</dbReference>
<dbReference type="STRING" id="39947.Q8H8U5"/>
<dbReference type="PaxDb" id="39947-Q8H8U5"/>
<dbReference type="EnsemblPlants" id="Os03t0283100-01">
    <property type="protein sequence ID" value="Os03t0283100-01"/>
    <property type="gene ID" value="Os03g0283100"/>
</dbReference>
<dbReference type="EnsemblPlants" id="Os03t0283100-02">
    <property type="protein sequence ID" value="Os03t0283100-02"/>
    <property type="gene ID" value="Os03g0283100"/>
</dbReference>
<dbReference type="Gramene" id="Os03t0283100-01">
    <property type="protein sequence ID" value="Os03t0283100-01"/>
    <property type="gene ID" value="Os03g0283100"/>
</dbReference>
<dbReference type="Gramene" id="Os03t0283100-02">
    <property type="protein sequence ID" value="Os03t0283100-02"/>
    <property type="gene ID" value="Os03g0283100"/>
</dbReference>
<dbReference type="KEGG" id="dosa:Os03g0283100"/>
<dbReference type="eggNOG" id="KOG0406">
    <property type="taxonomic scope" value="Eukaryota"/>
</dbReference>
<dbReference type="HOGENOM" id="CLU_072699_0_1_1"/>
<dbReference type="InParanoid" id="Q8H8U5"/>
<dbReference type="OMA" id="LAFPRCC"/>
<dbReference type="OrthoDB" id="4951845at2759"/>
<dbReference type="Proteomes" id="UP000000763">
    <property type="component" value="Chromosome 3"/>
</dbReference>
<dbReference type="Proteomes" id="UP000059680">
    <property type="component" value="Chromosome 3"/>
</dbReference>
<dbReference type="GO" id="GO:0004364">
    <property type="term" value="F:glutathione transferase activity"/>
    <property type="evidence" value="ECO:0000318"/>
    <property type="project" value="GO_Central"/>
</dbReference>
<dbReference type="CDD" id="cd03203">
    <property type="entry name" value="GST_C_Lambda"/>
    <property type="match status" value="1"/>
</dbReference>
<dbReference type="FunFam" id="3.40.30.10:FF:000091">
    <property type="entry name" value="Glutathione S-transferase L2, chloroplastic"/>
    <property type="match status" value="1"/>
</dbReference>
<dbReference type="FunFam" id="1.20.1050.10:FF:000041">
    <property type="entry name" value="Lambda class glutathione S-transferase"/>
    <property type="match status" value="1"/>
</dbReference>
<dbReference type="Gene3D" id="1.20.1050.10">
    <property type="match status" value="1"/>
</dbReference>
<dbReference type="Gene3D" id="3.40.30.10">
    <property type="entry name" value="Glutaredoxin"/>
    <property type="match status" value="1"/>
</dbReference>
<dbReference type="InterPro" id="IPR010987">
    <property type="entry name" value="Glutathione-S-Trfase_C-like"/>
</dbReference>
<dbReference type="InterPro" id="IPR036282">
    <property type="entry name" value="Glutathione-S-Trfase_C_sf"/>
</dbReference>
<dbReference type="InterPro" id="IPR040079">
    <property type="entry name" value="Glutathione_S-Trfase"/>
</dbReference>
<dbReference type="InterPro" id="IPR004045">
    <property type="entry name" value="Glutathione_S-Trfase_N"/>
</dbReference>
<dbReference type="InterPro" id="IPR044629">
    <property type="entry name" value="GSTL1/2/3"/>
</dbReference>
<dbReference type="InterPro" id="IPR036249">
    <property type="entry name" value="Thioredoxin-like_sf"/>
</dbReference>
<dbReference type="PANTHER" id="PTHR44328">
    <property type="entry name" value="GLUTATHIONE S-TRANSFERASE L1"/>
    <property type="match status" value="1"/>
</dbReference>
<dbReference type="PANTHER" id="PTHR44328:SF16">
    <property type="entry name" value="PROTEIN IN2-1 HOMOLOG B"/>
    <property type="match status" value="1"/>
</dbReference>
<dbReference type="Pfam" id="PF13410">
    <property type="entry name" value="GST_C_2"/>
    <property type="match status" value="1"/>
</dbReference>
<dbReference type="Pfam" id="PF13417">
    <property type="entry name" value="GST_N_3"/>
    <property type="match status" value="1"/>
</dbReference>
<dbReference type="SFLD" id="SFLDS00019">
    <property type="entry name" value="Glutathione_Transferase_(cytos"/>
    <property type="match status" value="1"/>
</dbReference>
<dbReference type="SFLD" id="SFLDG00358">
    <property type="entry name" value="Main_(cytGST)"/>
    <property type="match status" value="1"/>
</dbReference>
<dbReference type="SUPFAM" id="SSF47616">
    <property type="entry name" value="GST C-terminal domain-like"/>
    <property type="match status" value="1"/>
</dbReference>
<dbReference type="SUPFAM" id="SSF52833">
    <property type="entry name" value="Thioredoxin-like"/>
    <property type="match status" value="1"/>
</dbReference>
<dbReference type="PROSITE" id="PS50405">
    <property type="entry name" value="GST_CTER"/>
    <property type="match status" value="1"/>
</dbReference>
<dbReference type="PROSITE" id="PS50404">
    <property type="entry name" value="GST_NTER"/>
    <property type="match status" value="1"/>
</dbReference>
<protein>
    <recommendedName>
        <fullName>Protein IN2-1 homolog B</fullName>
    </recommendedName>
    <alternativeName>
        <fullName>Glutathione S-transferase GSTZ5</fullName>
    </alternativeName>
</protein>
<reference evidence="6 7" key="1">
    <citation type="journal article" date="2005" name="Genome Res.">
        <title>Sequence, annotation, and analysis of synteny between rice chromosome 3 and diverged grass species.</title>
        <authorList>
            <consortium name="The rice chromosome 3 sequencing consortium"/>
            <person name="Buell C.R."/>
            <person name="Yuan Q."/>
            <person name="Ouyang S."/>
            <person name="Liu J."/>
            <person name="Zhu W."/>
            <person name="Wang A."/>
            <person name="Maiti R."/>
            <person name="Haas B."/>
            <person name="Wortman J."/>
            <person name="Pertea M."/>
            <person name="Jones K.M."/>
            <person name="Kim M."/>
            <person name="Overton L."/>
            <person name="Tsitrin T."/>
            <person name="Fadrosh D."/>
            <person name="Bera J."/>
            <person name="Weaver B."/>
            <person name="Jin S."/>
            <person name="Johri S."/>
            <person name="Reardon M."/>
            <person name="Webb K."/>
            <person name="Hill J."/>
            <person name="Moffat K."/>
            <person name="Tallon L."/>
            <person name="Van Aken S."/>
            <person name="Lewis M."/>
            <person name="Utterback T."/>
            <person name="Feldblyum T."/>
            <person name="Zismann V."/>
            <person name="Iobst S."/>
            <person name="Hsiao J."/>
            <person name="de Vazeille A.R."/>
            <person name="Salzberg S.L."/>
            <person name="White O."/>
            <person name="Fraser C.M."/>
            <person name="Yu Y."/>
            <person name="Kim H."/>
            <person name="Rambo T."/>
            <person name="Currie J."/>
            <person name="Collura K."/>
            <person name="Kernodle-Thompson S."/>
            <person name="Wei F."/>
            <person name="Kudrna K."/>
            <person name="Ammiraju J.S.S."/>
            <person name="Luo M."/>
            <person name="Goicoechea J.L."/>
            <person name="Wing R.A."/>
            <person name="Henry D."/>
            <person name="Oates R."/>
            <person name="Palmer M."/>
            <person name="Pries G."/>
            <person name="Saski C."/>
            <person name="Simmons J."/>
            <person name="Soderlund C."/>
            <person name="Nelson W."/>
            <person name="de la Bastide M."/>
            <person name="Spiegel L."/>
            <person name="Nascimento L."/>
            <person name="Huang E."/>
            <person name="Preston R."/>
            <person name="Zutavern T."/>
            <person name="Palmer L."/>
            <person name="O'Shaughnessy A."/>
            <person name="Dike S."/>
            <person name="McCombie W.R."/>
            <person name="Minx P."/>
            <person name="Cordum H."/>
            <person name="Wilson R."/>
            <person name="Jin W."/>
            <person name="Lee H.R."/>
            <person name="Jiang J."/>
            <person name="Jackson S."/>
        </authorList>
    </citation>
    <scope>NUCLEOTIDE SEQUENCE [LARGE SCALE GENOMIC DNA]</scope>
    <source>
        <strain evidence="5">cv. Nipponbare</strain>
    </source>
</reference>
<reference evidence="6 8" key="2">
    <citation type="journal article" date="2005" name="Nature">
        <title>The map-based sequence of the rice genome.</title>
        <authorList>
            <consortium name="International rice genome sequencing project (IRGSP)"/>
        </authorList>
    </citation>
    <scope>NUCLEOTIDE SEQUENCE [LARGE SCALE GENOMIC DNA]</scope>
    <source>
        <strain evidence="4">cv. Nipponbare</strain>
    </source>
</reference>
<reference key="3">
    <citation type="journal article" date="2008" name="Nucleic Acids Res.">
        <title>The rice annotation project database (RAP-DB): 2008 update.</title>
        <authorList>
            <consortium name="The rice annotation project (RAP)"/>
        </authorList>
    </citation>
    <scope>GENOME REANNOTATION</scope>
    <source>
        <strain>cv. Nipponbare</strain>
    </source>
</reference>
<reference key="4">
    <citation type="journal article" date="2013" name="Rice">
        <title>Improvement of the Oryza sativa Nipponbare reference genome using next generation sequence and optical map data.</title>
        <authorList>
            <person name="Kawahara Y."/>
            <person name="de la Bastide M."/>
            <person name="Hamilton J.P."/>
            <person name="Kanamori H."/>
            <person name="McCombie W.R."/>
            <person name="Ouyang S."/>
            <person name="Schwartz D.C."/>
            <person name="Tanaka T."/>
            <person name="Wu J."/>
            <person name="Zhou S."/>
            <person name="Childs K.L."/>
            <person name="Davidson R.M."/>
            <person name="Lin H."/>
            <person name="Quesada-Ocampo L."/>
            <person name="Vaillancourt B."/>
            <person name="Sakai H."/>
            <person name="Lee S.S."/>
            <person name="Kim J."/>
            <person name="Numa H."/>
            <person name="Itoh T."/>
            <person name="Buell C.R."/>
            <person name="Matsumoto T."/>
        </authorList>
    </citation>
    <scope>GENOME REANNOTATION</scope>
    <source>
        <strain>cv. Nipponbare</strain>
    </source>
</reference>
<reference key="5">
    <citation type="journal article" date="2003" name="Science">
        <title>Collection, mapping, and annotation of over 28,000 cDNA clones from japonica rice.</title>
        <authorList>
            <consortium name="The rice full-length cDNA consortium"/>
        </authorList>
    </citation>
    <scope>NUCLEOTIDE SEQUENCE [LARGE SCALE MRNA]</scope>
    <source>
        <strain>cv. Nipponbare</strain>
    </source>
</reference>
<feature type="chain" id="PRO_0000361767" description="Protein IN2-1 homolog B">
    <location>
        <begin position="1"/>
        <end position="244"/>
    </location>
</feature>
<feature type="domain" description="GST N-terminal" evidence="2">
    <location>
        <begin position="32"/>
        <end position="113"/>
    </location>
</feature>
<feature type="domain" description="GST C-terminal" evidence="2">
    <location>
        <begin position="118"/>
        <end position="241"/>
    </location>
</feature>
<feature type="region of interest" description="Disordered" evidence="3">
    <location>
        <begin position="1"/>
        <end position="27"/>
    </location>
</feature>
<feature type="binding site" evidence="1">
    <location>
        <position position="85"/>
    </location>
    <ligand>
        <name>glutathione</name>
        <dbReference type="ChEBI" id="CHEBI:57925"/>
    </ligand>
</feature>
<feature type="binding site" evidence="1">
    <location>
        <begin position="97"/>
        <end position="98"/>
    </location>
    <ligand>
        <name>glutathione</name>
        <dbReference type="ChEBI" id="CHEBI:57925"/>
    </ligand>
</feature>
<gene>
    <name type="primary">GSTZ5</name>
    <name type="ordered locus">Os03g0283100</name>
    <name type="ordered locus">LOC_Os03g17470</name>
</gene>